<comment type="function">
    <text evidence="1">Catalyzes the conversion of 1-hydroxy-2-methyl-2-(E)-butenyl 4-diphosphate (HMBPP) into a mixture of isopentenyl diphosphate (IPP) and dimethylallyl diphosphate (DMAPP). Acts in the terminal step of the DOXP/MEP pathway for isoprenoid precursor biosynthesis.</text>
</comment>
<comment type="catalytic activity">
    <reaction evidence="1">
        <text>isopentenyl diphosphate + 2 oxidized [2Fe-2S]-[ferredoxin] + H2O = (2E)-4-hydroxy-3-methylbut-2-enyl diphosphate + 2 reduced [2Fe-2S]-[ferredoxin] + 2 H(+)</text>
        <dbReference type="Rhea" id="RHEA:24488"/>
        <dbReference type="Rhea" id="RHEA-COMP:10000"/>
        <dbReference type="Rhea" id="RHEA-COMP:10001"/>
        <dbReference type="ChEBI" id="CHEBI:15377"/>
        <dbReference type="ChEBI" id="CHEBI:15378"/>
        <dbReference type="ChEBI" id="CHEBI:33737"/>
        <dbReference type="ChEBI" id="CHEBI:33738"/>
        <dbReference type="ChEBI" id="CHEBI:128753"/>
        <dbReference type="ChEBI" id="CHEBI:128769"/>
        <dbReference type="EC" id="1.17.7.4"/>
    </reaction>
</comment>
<comment type="catalytic activity">
    <reaction evidence="1">
        <text>dimethylallyl diphosphate + 2 oxidized [2Fe-2S]-[ferredoxin] + H2O = (2E)-4-hydroxy-3-methylbut-2-enyl diphosphate + 2 reduced [2Fe-2S]-[ferredoxin] + 2 H(+)</text>
        <dbReference type="Rhea" id="RHEA:24825"/>
        <dbReference type="Rhea" id="RHEA-COMP:10000"/>
        <dbReference type="Rhea" id="RHEA-COMP:10001"/>
        <dbReference type="ChEBI" id="CHEBI:15377"/>
        <dbReference type="ChEBI" id="CHEBI:15378"/>
        <dbReference type="ChEBI" id="CHEBI:33737"/>
        <dbReference type="ChEBI" id="CHEBI:33738"/>
        <dbReference type="ChEBI" id="CHEBI:57623"/>
        <dbReference type="ChEBI" id="CHEBI:128753"/>
        <dbReference type="EC" id="1.17.7.4"/>
    </reaction>
</comment>
<comment type="cofactor">
    <cofactor evidence="1">
        <name>[4Fe-4S] cluster</name>
        <dbReference type="ChEBI" id="CHEBI:49883"/>
    </cofactor>
    <text evidence="1">Binds 1 [4Fe-4S] cluster per subunit.</text>
</comment>
<comment type="pathway">
    <text evidence="1">Isoprenoid biosynthesis; dimethylallyl diphosphate biosynthesis; dimethylallyl diphosphate from (2E)-4-hydroxy-3-methylbutenyl diphosphate: step 1/1.</text>
</comment>
<comment type="pathway">
    <text evidence="1">Isoprenoid biosynthesis; isopentenyl diphosphate biosynthesis via DXP pathway; isopentenyl diphosphate from 1-deoxy-D-xylulose 5-phosphate: step 6/6.</text>
</comment>
<comment type="similarity">
    <text evidence="1">Belongs to the IspH family.</text>
</comment>
<protein>
    <recommendedName>
        <fullName evidence="1">4-hydroxy-3-methylbut-2-enyl diphosphate reductase</fullName>
        <shortName evidence="1">HMBPP reductase</shortName>
        <ecNumber evidence="1">1.17.7.4</ecNumber>
    </recommendedName>
</protein>
<proteinExistence type="inferred from homology"/>
<gene>
    <name evidence="1" type="primary">ispH</name>
    <name type="synonym">lytB</name>
    <name type="ordered locus">IL1125</name>
</gene>
<evidence type="ECO:0000255" key="1">
    <source>
        <dbReference type="HAMAP-Rule" id="MF_00191"/>
    </source>
</evidence>
<sequence>MQILLANPRGFCAGVDRAITIVERALEIFEPPIYVRHEVVHNKYVVSKLREAGAVFVEELHEVPDDQIVIFSAHGVSQAVRQEAKDRGLRVFDATCPLVTKVHMEVTRASRKGHECILIGHAGHPEVEGTMGQYNNDEGGIYLVESPEDVAKLEVKDPGNLHYMSQTTLSVDDTADVIDALRQKFPDINGPRKDDICYATQNRQDAVRELASDADVMLVVGARNSSNSNRLRELSEKMGTPAYLIDDASCIDKAWLEGHEKVAVTAGASAPEVLVKEVIAKLQEWGGKTAVELSGREENITFSIPPELRPHPVG</sequence>
<reference key="1">
    <citation type="journal article" date="2004" name="Proc. Natl. Acad. Sci. U.S.A.">
        <title>Genome sequence of the deep-sea gamma-proteobacterium Idiomarina loihiensis reveals amino acid fermentation as a source of carbon and energy.</title>
        <authorList>
            <person name="Hou S."/>
            <person name="Saw J.H."/>
            <person name="Lee K.S."/>
            <person name="Freitas T.A."/>
            <person name="Belisle C."/>
            <person name="Kawarabayasi Y."/>
            <person name="Donachie S.P."/>
            <person name="Pikina A."/>
            <person name="Galperin M.Y."/>
            <person name="Koonin E.V."/>
            <person name="Makarova K.S."/>
            <person name="Omelchenko M.V."/>
            <person name="Sorokin A."/>
            <person name="Wolf Y.I."/>
            <person name="Li Q.X."/>
            <person name="Keum Y.S."/>
            <person name="Campbell S."/>
            <person name="Denery J."/>
            <person name="Aizawa S."/>
            <person name="Shibata S."/>
            <person name="Malahoff A."/>
            <person name="Alam M."/>
        </authorList>
    </citation>
    <scope>NUCLEOTIDE SEQUENCE [LARGE SCALE GENOMIC DNA]</scope>
    <source>
        <strain>ATCC BAA-735 / DSM 15497 / L2-TR</strain>
    </source>
</reference>
<keyword id="KW-0004">4Fe-4S</keyword>
<keyword id="KW-0408">Iron</keyword>
<keyword id="KW-0411">Iron-sulfur</keyword>
<keyword id="KW-0414">Isoprene biosynthesis</keyword>
<keyword id="KW-0479">Metal-binding</keyword>
<keyword id="KW-0560">Oxidoreductase</keyword>
<keyword id="KW-1185">Reference proteome</keyword>
<feature type="chain" id="PRO_0000128828" description="4-hydroxy-3-methylbut-2-enyl diphosphate reductase">
    <location>
        <begin position="1"/>
        <end position="314"/>
    </location>
</feature>
<feature type="active site" description="Proton donor" evidence="1">
    <location>
        <position position="126"/>
    </location>
</feature>
<feature type="binding site" evidence="1">
    <location>
        <position position="12"/>
    </location>
    <ligand>
        <name>[4Fe-4S] cluster</name>
        <dbReference type="ChEBI" id="CHEBI:49883"/>
    </ligand>
</feature>
<feature type="binding site" evidence="1">
    <location>
        <position position="41"/>
    </location>
    <ligand>
        <name>(2E)-4-hydroxy-3-methylbut-2-enyl diphosphate</name>
        <dbReference type="ChEBI" id="CHEBI:128753"/>
    </ligand>
</feature>
<feature type="binding site" evidence="1">
    <location>
        <position position="41"/>
    </location>
    <ligand>
        <name>dimethylallyl diphosphate</name>
        <dbReference type="ChEBI" id="CHEBI:57623"/>
    </ligand>
</feature>
<feature type="binding site" evidence="1">
    <location>
        <position position="41"/>
    </location>
    <ligand>
        <name>isopentenyl diphosphate</name>
        <dbReference type="ChEBI" id="CHEBI:128769"/>
    </ligand>
</feature>
<feature type="binding site" evidence="1">
    <location>
        <position position="74"/>
    </location>
    <ligand>
        <name>(2E)-4-hydroxy-3-methylbut-2-enyl diphosphate</name>
        <dbReference type="ChEBI" id="CHEBI:128753"/>
    </ligand>
</feature>
<feature type="binding site" evidence="1">
    <location>
        <position position="74"/>
    </location>
    <ligand>
        <name>dimethylallyl diphosphate</name>
        <dbReference type="ChEBI" id="CHEBI:57623"/>
    </ligand>
</feature>
<feature type="binding site" evidence="1">
    <location>
        <position position="74"/>
    </location>
    <ligand>
        <name>isopentenyl diphosphate</name>
        <dbReference type="ChEBI" id="CHEBI:128769"/>
    </ligand>
</feature>
<feature type="binding site" evidence="1">
    <location>
        <position position="96"/>
    </location>
    <ligand>
        <name>[4Fe-4S] cluster</name>
        <dbReference type="ChEBI" id="CHEBI:49883"/>
    </ligand>
</feature>
<feature type="binding site" evidence="1">
    <location>
        <position position="124"/>
    </location>
    <ligand>
        <name>(2E)-4-hydroxy-3-methylbut-2-enyl diphosphate</name>
        <dbReference type="ChEBI" id="CHEBI:128753"/>
    </ligand>
</feature>
<feature type="binding site" evidence="1">
    <location>
        <position position="124"/>
    </location>
    <ligand>
        <name>dimethylallyl diphosphate</name>
        <dbReference type="ChEBI" id="CHEBI:57623"/>
    </ligand>
</feature>
<feature type="binding site" evidence="1">
    <location>
        <position position="124"/>
    </location>
    <ligand>
        <name>isopentenyl diphosphate</name>
        <dbReference type="ChEBI" id="CHEBI:128769"/>
    </ligand>
</feature>
<feature type="binding site" evidence="1">
    <location>
        <position position="167"/>
    </location>
    <ligand>
        <name>(2E)-4-hydroxy-3-methylbut-2-enyl diphosphate</name>
        <dbReference type="ChEBI" id="CHEBI:128753"/>
    </ligand>
</feature>
<feature type="binding site" evidence="1">
    <location>
        <position position="197"/>
    </location>
    <ligand>
        <name>[4Fe-4S] cluster</name>
        <dbReference type="ChEBI" id="CHEBI:49883"/>
    </ligand>
</feature>
<feature type="binding site" evidence="1">
    <location>
        <position position="225"/>
    </location>
    <ligand>
        <name>(2E)-4-hydroxy-3-methylbut-2-enyl diphosphate</name>
        <dbReference type="ChEBI" id="CHEBI:128753"/>
    </ligand>
</feature>
<feature type="binding site" evidence="1">
    <location>
        <position position="225"/>
    </location>
    <ligand>
        <name>dimethylallyl diphosphate</name>
        <dbReference type="ChEBI" id="CHEBI:57623"/>
    </ligand>
</feature>
<feature type="binding site" evidence="1">
    <location>
        <position position="225"/>
    </location>
    <ligand>
        <name>isopentenyl diphosphate</name>
        <dbReference type="ChEBI" id="CHEBI:128769"/>
    </ligand>
</feature>
<feature type="binding site" evidence="1">
    <location>
        <position position="226"/>
    </location>
    <ligand>
        <name>(2E)-4-hydroxy-3-methylbut-2-enyl diphosphate</name>
        <dbReference type="ChEBI" id="CHEBI:128753"/>
    </ligand>
</feature>
<feature type="binding site" evidence="1">
    <location>
        <position position="226"/>
    </location>
    <ligand>
        <name>dimethylallyl diphosphate</name>
        <dbReference type="ChEBI" id="CHEBI:57623"/>
    </ligand>
</feature>
<feature type="binding site" evidence="1">
    <location>
        <position position="226"/>
    </location>
    <ligand>
        <name>isopentenyl diphosphate</name>
        <dbReference type="ChEBI" id="CHEBI:128769"/>
    </ligand>
</feature>
<feature type="binding site" evidence="1">
    <location>
        <position position="227"/>
    </location>
    <ligand>
        <name>(2E)-4-hydroxy-3-methylbut-2-enyl diphosphate</name>
        <dbReference type="ChEBI" id="CHEBI:128753"/>
    </ligand>
</feature>
<feature type="binding site" evidence="1">
    <location>
        <position position="227"/>
    </location>
    <ligand>
        <name>dimethylallyl diphosphate</name>
        <dbReference type="ChEBI" id="CHEBI:57623"/>
    </ligand>
</feature>
<feature type="binding site" evidence="1">
    <location>
        <position position="227"/>
    </location>
    <ligand>
        <name>isopentenyl diphosphate</name>
        <dbReference type="ChEBI" id="CHEBI:128769"/>
    </ligand>
</feature>
<feature type="binding site" evidence="1">
    <location>
        <position position="269"/>
    </location>
    <ligand>
        <name>(2E)-4-hydroxy-3-methylbut-2-enyl diphosphate</name>
        <dbReference type="ChEBI" id="CHEBI:128753"/>
    </ligand>
</feature>
<feature type="binding site" evidence="1">
    <location>
        <position position="269"/>
    </location>
    <ligand>
        <name>dimethylallyl diphosphate</name>
        <dbReference type="ChEBI" id="CHEBI:57623"/>
    </ligand>
</feature>
<feature type="binding site" evidence="1">
    <location>
        <position position="269"/>
    </location>
    <ligand>
        <name>isopentenyl diphosphate</name>
        <dbReference type="ChEBI" id="CHEBI:128769"/>
    </ligand>
</feature>
<name>ISPH_IDILO</name>
<dbReference type="EC" id="1.17.7.4" evidence="1"/>
<dbReference type="EMBL" id="AE017340">
    <property type="protein sequence ID" value="AAV81965.1"/>
    <property type="molecule type" value="Genomic_DNA"/>
</dbReference>
<dbReference type="RefSeq" id="WP_011234376.1">
    <property type="nucleotide sequence ID" value="NC_006512.1"/>
</dbReference>
<dbReference type="SMR" id="Q5QZR7"/>
<dbReference type="STRING" id="283942.IL1125"/>
<dbReference type="GeneID" id="41336293"/>
<dbReference type="KEGG" id="ilo:IL1125"/>
<dbReference type="eggNOG" id="COG0761">
    <property type="taxonomic scope" value="Bacteria"/>
</dbReference>
<dbReference type="HOGENOM" id="CLU_027486_1_0_6"/>
<dbReference type="OrthoDB" id="9804068at2"/>
<dbReference type="UniPathway" id="UPA00056">
    <property type="reaction ID" value="UER00097"/>
</dbReference>
<dbReference type="UniPathway" id="UPA00059">
    <property type="reaction ID" value="UER00105"/>
</dbReference>
<dbReference type="Proteomes" id="UP000001171">
    <property type="component" value="Chromosome"/>
</dbReference>
<dbReference type="GO" id="GO:0051539">
    <property type="term" value="F:4 iron, 4 sulfur cluster binding"/>
    <property type="evidence" value="ECO:0007669"/>
    <property type="project" value="UniProtKB-UniRule"/>
</dbReference>
<dbReference type="GO" id="GO:0051745">
    <property type="term" value="F:4-hydroxy-3-methylbut-2-enyl diphosphate reductase activity"/>
    <property type="evidence" value="ECO:0007669"/>
    <property type="project" value="UniProtKB-UniRule"/>
</dbReference>
<dbReference type="GO" id="GO:0046872">
    <property type="term" value="F:metal ion binding"/>
    <property type="evidence" value="ECO:0007669"/>
    <property type="project" value="UniProtKB-KW"/>
</dbReference>
<dbReference type="GO" id="GO:0050992">
    <property type="term" value="P:dimethylallyl diphosphate biosynthetic process"/>
    <property type="evidence" value="ECO:0007669"/>
    <property type="project" value="UniProtKB-UniRule"/>
</dbReference>
<dbReference type="GO" id="GO:0019288">
    <property type="term" value="P:isopentenyl diphosphate biosynthetic process, methylerythritol 4-phosphate pathway"/>
    <property type="evidence" value="ECO:0007669"/>
    <property type="project" value="UniProtKB-UniRule"/>
</dbReference>
<dbReference type="GO" id="GO:0016114">
    <property type="term" value="P:terpenoid biosynthetic process"/>
    <property type="evidence" value="ECO:0007669"/>
    <property type="project" value="UniProtKB-UniRule"/>
</dbReference>
<dbReference type="CDD" id="cd13944">
    <property type="entry name" value="lytB_ispH"/>
    <property type="match status" value="1"/>
</dbReference>
<dbReference type="Gene3D" id="3.40.50.11270">
    <property type="match status" value="1"/>
</dbReference>
<dbReference type="Gene3D" id="3.40.1010.20">
    <property type="entry name" value="4-hydroxy-3-methylbut-2-enyl diphosphate reductase, catalytic domain"/>
    <property type="match status" value="2"/>
</dbReference>
<dbReference type="HAMAP" id="MF_00191">
    <property type="entry name" value="IspH"/>
    <property type="match status" value="1"/>
</dbReference>
<dbReference type="InterPro" id="IPR003451">
    <property type="entry name" value="LytB/IspH"/>
</dbReference>
<dbReference type="NCBIfam" id="TIGR00216">
    <property type="entry name" value="ispH_lytB"/>
    <property type="match status" value="1"/>
</dbReference>
<dbReference type="NCBIfam" id="NF002188">
    <property type="entry name" value="PRK01045.1-2"/>
    <property type="match status" value="1"/>
</dbReference>
<dbReference type="NCBIfam" id="NF002190">
    <property type="entry name" value="PRK01045.1-4"/>
    <property type="match status" value="1"/>
</dbReference>
<dbReference type="PANTHER" id="PTHR30426">
    <property type="entry name" value="4-HYDROXY-3-METHYLBUT-2-ENYL DIPHOSPHATE REDUCTASE"/>
    <property type="match status" value="1"/>
</dbReference>
<dbReference type="PANTHER" id="PTHR30426:SF0">
    <property type="entry name" value="4-HYDROXY-3-METHYLBUT-2-ENYL DIPHOSPHATE REDUCTASE"/>
    <property type="match status" value="1"/>
</dbReference>
<dbReference type="Pfam" id="PF02401">
    <property type="entry name" value="LYTB"/>
    <property type="match status" value="1"/>
</dbReference>
<accession>Q5QZR7</accession>
<organism>
    <name type="scientific">Idiomarina loihiensis (strain ATCC BAA-735 / DSM 15497 / L2-TR)</name>
    <dbReference type="NCBI Taxonomy" id="283942"/>
    <lineage>
        <taxon>Bacteria</taxon>
        <taxon>Pseudomonadati</taxon>
        <taxon>Pseudomonadota</taxon>
        <taxon>Gammaproteobacteria</taxon>
        <taxon>Alteromonadales</taxon>
        <taxon>Idiomarinaceae</taxon>
        <taxon>Idiomarina</taxon>
    </lineage>
</organism>